<sequence>MRIVFAGTPAPALPSLERLLASRHEVVAVLTRPDARAGRGRASASSPVAALAREHGVAVLTPARPNEPEFVRELAQLDVDCCAVVAYGALLKPELLAVPRLGWVNLHFSLLPAWRGAAPVQASIAAGDEITGATTFLIEPALDSGPVYGVVTERISPNDTAGALLGRLAESGAGLLESTMDGIEDGALVAVPQAVDGVSIAPKITVEQARIRWELPAHAIDRHIRAMTPEPGAWTNIGGTRVKVGPVGVATDEQLPPGAVAVRKRDVLVGTGTTAIALDEVQPQGKKVMKAADWARGARLDAEVHAL</sequence>
<comment type="function">
    <text evidence="1">Attaches a formyl group to the free amino group of methionyl-tRNA(fMet). The formyl group appears to play a dual role in the initiator identity of N-formylmethionyl-tRNA by promoting its recognition by IF2 and preventing the misappropriation of this tRNA by the elongation apparatus.</text>
</comment>
<comment type="catalytic activity">
    <reaction evidence="1">
        <text>L-methionyl-tRNA(fMet) + (6R)-10-formyltetrahydrofolate = N-formyl-L-methionyl-tRNA(fMet) + (6S)-5,6,7,8-tetrahydrofolate + H(+)</text>
        <dbReference type="Rhea" id="RHEA:24380"/>
        <dbReference type="Rhea" id="RHEA-COMP:9952"/>
        <dbReference type="Rhea" id="RHEA-COMP:9953"/>
        <dbReference type="ChEBI" id="CHEBI:15378"/>
        <dbReference type="ChEBI" id="CHEBI:57453"/>
        <dbReference type="ChEBI" id="CHEBI:78530"/>
        <dbReference type="ChEBI" id="CHEBI:78844"/>
        <dbReference type="ChEBI" id="CHEBI:195366"/>
        <dbReference type="EC" id="2.1.2.9"/>
    </reaction>
</comment>
<comment type="similarity">
    <text evidence="1">Belongs to the Fmt family.</text>
</comment>
<accession>B1MCB9</accession>
<organism>
    <name type="scientific">Mycobacteroides abscessus (strain ATCC 19977 / DSM 44196 / CCUG 20993 / CIP 104536 / JCM 13569 / NCTC 13031 / TMC 1543 / L948)</name>
    <name type="common">Mycobacterium abscessus</name>
    <dbReference type="NCBI Taxonomy" id="561007"/>
    <lineage>
        <taxon>Bacteria</taxon>
        <taxon>Bacillati</taxon>
        <taxon>Actinomycetota</taxon>
        <taxon>Actinomycetes</taxon>
        <taxon>Mycobacteriales</taxon>
        <taxon>Mycobacteriaceae</taxon>
        <taxon>Mycobacteroides</taxon>
        <taxon>Mycobacteroides abscessus</taxon>
    </lineage>
</organism>
<keyword id="KW-0648">Protein biosynthesis</keyword>
<keyword id="KW-1185">Reference proteome</keyword>
<keyword id="KW-0808">Transferase</keyword>
<dbReference type="EC" id="2.1.2.9" evidence="1"/>
<dbReference type="EMBL" id="CU458896">
    <property type="protein sequence ID" value="CAM62890.1"/>
    <property type="molecule type" value="Genomic_DNA"/>
</dbReference>
<dbReference type="RefSeq" id="WP_012296597.1">
    <property type="nucleotide sequence ID" value="NZ_MLCG01000003.1"/>
</dbReference>
<dbReference type="SMR" id="B1MCB9"/>
<dbReference type="GeneID" id="93379742"/>
<dbReference type="KEGG" id="mab:MAB_2811c"/>
<dbReference type="Proteomes" id="UP000007137">
    <property type="component" value="Chromosome"/>
</dbReference>
<dbReference type="GO" id="GO:0005829">
    <property type="term" value="C:cytosol"/>
    <property type="evidence" value="ECO:0007669"/>
    <property type="project" value="TreeGrafter"/>
</dbReference>
<dbReference type="GO" id="GO:0004479">
    <property type="term" value="F:methionyl-tRNA formyltransferase activity"/>
    <property type="evidence" value="ECO:0007669"/>
    <property type="project" value="UniProtKB-UniRule"/>
</dbReference>
<dbReference type="CDD" id="cd08646">
    <property type="entry name" value="FMT_core_Met-tRNA-FMT_N"/>
    <property type="match status" value="1"/>
</dbReference>
<dbReference type="CDD" id="cd08704">
    <property type="entry name" value="Met_tRNA_FMT_C"/>
    <property type="match status" value="1"/>
</dbReference>
<dbReference type="FunFam" id="3.40.50.12230:FF:000001">
    <property type="entry name" value="Methionyl-tRNA formyltransferase"/>
    <property type="match status" value="1"/>
</dbReference>
<dbReference type="Gene3D" id="3.40.50.12230">
    <property type="match status" value="1"/>
</dbReference>
<dbReference type="HAMAP" id="MF_00182">
    <property type="entry name" value="Formyl_trans"/>
    <property type="match status" value="1"/>
</dbReference>
<dbReference type="InterPro" id="IPR005794">
    <property type="entry name" value="Fmt"/>
</dbReference>
<dbReference type="InterPro" id="IPR005793">
    <property type="entry name" value="Formyl_trans_C"/>
</dbReference>
<dbReference type="InterPro" id="IPR002376">
    <property type="entry name" value="Formyl_transf_N"/>
</dbReference>
<dbReference type="InterPro" id="IPR036477">
    <property type="entry name" value="Formyl_transf_N_sf"/>
</dbReference>
<dbReference type="InterPro" id="IPR011034">
    <property type="entry name" value="Formyl_transferase-like_C_sf"/>
</dbReference>
<dbReference type="InterPro" id="IPR044135">
    <property type="entry name" value="Met-tRNA-FMT_C"/>
</dbReference>
<dbReference type="InterPro" id="IPR041711">
    <property type="entry name" value="Met-tRNA-FMT_N"/>
</dbReference>
<dbReference type="NCBIfam" id="TIGR00460">
    <property type="entry name" value="fmt"/>
    <property type="match status" value="1"/>
</dbReference>
<dbReference type="PANTHER" id="PTHR11138">
    <property type="entry name" value="METHIONYL-TRNA FORMYLTRANSFERASE"/>
    <property type="match status" value="1"/>
</dbReference>
<dbReference type="PANTHER" id="PTHR11138:SF5">
    <property type="entry name" value="METHIONYL-TRNA FORMYLTRANSFERASE, MITOCHONDRIAL"/>
    <property type="match status" value="1"/>
</dbReference>
<dbReference type="Pfam" id="PF02911">
    <property type="entry name" value="Formyl_trans_C"/>
    <property type="match status" value="1"/>
</dbReference>
<dbReference type="Pfam" id="PF00551">
    <property type="entry name" value="Formyl_trans_N"/>
    <property type="match status" value="1"/>
</dbReference>
<dbReference type="SUPFAM" id="SSF50486">
    <property type="entry name" value="FMT C-terminal domain-like"/>
    <property type="match status" value="1"/>
</dbReference>
<dbReference type="SUPFAM" id="SSF53328">
    <property type="entry name" value="Formyltransferase"/>
    <property type="match status" value="1"/>
</dbReference>
<name>FMT_MYCA9</name>
<evidence type="ECO:0000255" key="1">
    <source>
        <dbReference type="HAMAP-Rule" id="MF_00182"/>
    </source>
</evidence>
<gene>
    <name evidence="1" type="primary">fmt</name>
    <name type="ordered locus">MAB_2811c</name>
</gene>
<feature type="chain" id="PRO_1000098419" description="Methionyl-tRNA formyltransferase">
    <location>
        <begin position="1"/>
        <end position="307"/>
    </location>
</feature>
<feature type="binding site" evidence="1">
    <location>
        <begin position="109"/>
        <end position="112"/>
    </location>
    <ligand>
        <name>(6S)-5,6,7,8-tetrahydrofolate</name>
        <dbReference type="ChEBI" id="CHEBI:57453"/>
    </ligand>
</feature>
<proteinExistence type="inferred from homology"/>
<reference key="1">
    <citation type="journal article" date="2009" name="PLoS ONE">
        <title>Non mycobacterial virulence genes in the genome of the emerging pathogen Mycobacterium abscessus.</title>
        <authorList>
            <person name="Ripoll F."/>
            <person name="Pasek S."/>
            <person name="Schenowitz C."/>
            <person name="Dossat C."/>
            <person name="Barbe V."/>
            <person name="Rottman M."/>
            <person name="Macheras E."/>
            <person name="Heym B."/>
            <person name="Herrmann J.L."/>
            <person name="Daffe M."/>
            <person name="Brosch R."/>
            <person name="Risler J.L."/>
            <person name="Gaillard J.L."/>
        </authorList>
    </citation>
    <scope>NUCLEOTIDE SEQUENCE [LARGE SCALE GENOMIC DNA]</scope>
    <source>
        <strain>ATCC 19977 / DSM 44196 / CCUG 20993 / CIP 104536 / JCM 13569 / NCTC 13031 / TMC 1543 / L948</strain>
    </source>
</reference>
<protein>
    <recommendedName>
        <fullName evidence="1">Methionyl-tRNA formyltransferase</fullName>
        <ecNumber evidence="1">2.1.2.9</ecNumber>
    </recommendedName>
</protein>